<name>RS8_STRA5</name>
<organism>
    <name type="scientific">Streptococcus agalactiae serotype V (strain ATCC BAA-611 / 2603 V/R)</name>
    <dbReference type="NCBI Taxonomy" id="208435"/>
    <lineage>
        <taxon>Bacteria</taxon>
        <taxon>Bacillati</taxon>
        <taxon>Bacillota</taxon>
        <taxon>Bacilli</taxon>
        <taxon>Lactobacillales</taxon>
        <taxon>Streptococcaceae</taxon>
        <taxon>Streptococcus</taxon>
    </lineage>
</organism>
<sequence>MVMTDPIADFLTRIRNANQAKHEVLEVPASNIKKGIADILKREGFVKNVEVIEDDKQGIIRVFLKYGQNGERVITNLKRISKPGLRVYTKHEDMPKVLNGLGIAIVSTSEGLLTDKEARQKNIGGEVLAYIW</sequence>
<protein>
    <recommendedName>
        <fullName evidence="1">Small ribosomal subunit protein uS8</fullName>
    </recommendedName>
    <alternativeName>
        <fullName evidence="2">30S ribosomal protein S8</fullName>
    </alternativeName>
</protein>
<reference key="1">
    <citation type="journal article" date="2002" name="Proc. Natl. Acad. Sci. U.S.A.">
        <title>Complete genome sequence and comparative genomic analysis of an emerging human pathogen, serotype V Streptococcus agalactiae.</title>
        <authorList>
            <person name="Tettelin H."/>
            <person name="Masignani V."/>
            <person name="Cieslewicz M.J."/>
            <person name="Eisen J.A."/>
            <person name="Peterson S.N."/>
            <person name="Wessels M.R."/>
            <person name="Paulsen I.T."/>
            <person name="Nelson K.E."/>
            <person name="Margarit I."/>
            <person name="Read T.D."/>
            <person name="Madoff L.C."/>
            <person name="Wolf A.M."/>
            <person name="Beanan M.J."/>
            <person name="Brinkac L.M."/>
            <person name="Daugherty S.C."/>
            <person name="DeBoy R.T."/>
            <person name="Durkin A.S."/>
            <person name="Kolonay J.F."/>
            <person name="Madupu R."/>
            <person name="Lewis M.R."/>
            <person name="Radune D."/>
            <person name="Fedorova N.B."/>
            <person name="Scanlan D."/>
            <person name="Khouri H.M."/>
            <person name="Mulligan S."/>
            <person name="Carty H.A."/>
            <person name="Cline R.T."/>
            <person name="Van Aken S.E."/>
            <person name="Gill J."/>
            <person name="Scarselli M."/>
            <person name="Mora M."/>
            <person name="Iacobini E.T."/>
            <person name="Brettoni C."/>
            <person name="Galli G."/>
            <person name="Mariani M."/>
            <person name="Vegni F."/>
            <person name="Maione D."/>
            <person name="Rinaudo D."/>
            <person name="Rappuoli R."/>
            <person name="Telford J.L."/>
            <person name="Kasper D.L."/>
            <person name="Grandi G."/>
            <person name="Fraser C.M."/>
        </authorList>
    </citation>
    <scope>NUCLEOTIDE SEQUENCE [LARGE SCALE GENOMIC DNA]</scope>
    <source>
        <strain>ATCC BAA-611 / 2603 V/R</strain>
    </source>
</reference>
<proteinExistence type="inferred from homology"/>
<evidence type="ECO:0000255" key="1">
    <source>
        <dbReference type="HAMAP-Rule" id="MF_01302"/>
    </source>
</evidence>
<evidence type="ECO:0000305" key="2"/>
<comment type="function">
    <text evidence="1">One of the primary rRNA binding proteins, it binds directly to 16S rRNA central domain where it helps coordinate assembly of the platform of the 30S subunit.</text>
</comment>
<comment type="subunit">
    <text evidence="1">Part of the 30S ribosomal subunit. Contacts proteins S5 and S12.</text>
</comment>
<comment type="similarity">
    <text evidence="1">Belongs to the universal ribosomal protein uS8 family.</text>
</comment>
<accession>Q8E2C0</accession>
<gene>
    <name evidence="1" type="primary">rpsH</name>
    <name type="ordered locus">SAG0072</name>
</gene>
<dbReference type="EMBL" id="AE009948">
    <property type="protein sequence ID" value="AAM98980.1"/>
    <property type="molecule type" value="Genomic_DNA"/>
</dbReference>
<dbReference type="RefSeq" id="NP_687108.1">
    <property type="nucleotide sequence ID" value="NC_004116.1"/>
</dbReference>
<dbReference type="RefSeq" id="WP_000245500.1">
    <property type="nucleotide sequence ID" value="NC_004116.1"/>
</dbReference>
<dbReference type="SMR" id="Q8E2C0"/>
<dbReference type="STRING" id="208435.SAG0072"/>
<dbReference type="KEGG" id="sag:SAG0072"/>
<dbReference type="PATRIC" id="fig|208435.3.peg.71"/>
<dbReference type="HOGENOM" id="CLU_098428_0_2_9"/>
<dbReference type="OrthoDB" id="9802617at2"/>
<dbReference type="Proteomes" id="UP000000821">
    <property type="component" value="Chromosome"/>
</dbReference>
<dbReference type="GO" id="GO:1990904">
    <property type="term" value="C:ribonucleoprotein complex"/>
    <property type="evidence" value="ECO:0007669"/>
    <property type="project" value="UniProtKB-KW"/>
</dbReference>
<dbReference type="GO" id="GO:0005840">
    <property type="term" value="C:ribosome"/>
    <property type="evidence" value="ECO:0007669"/>
    <property type="project" value="UniProtKB-KW"/>
</dbReference>
<dbReference type="GO" id="GO:0019843">
    <property type="term" value="F:rRNA binding"/>
    <property type="evidence" value="ECO:0007669"/>
    <property type="project" value="UniProtKB-UniRule"/>
</dbReference>
<dbReference type="GO" id="GO:0003735">
    <property type="term" value="F:structural constituent of ribosome"/>
    <property type="evidence" value="ECO:0007669"/>
    <property type="project" value="InterPro"/>
</dbReference>
<dbReference type="GO" id="GO:0006412">
    <property type="term" value="P:translation"/>
    <property type="evidence" value="ECO:0007669"/>
    <property type="project" value="UniProtKB-UniRule"/>
</dbReference>
<dbReference type="FunFam" id="3.30.1370.30:FF:000002">
    <property type="entry name" value="30S ribosomal protein S8"/>
    <property type="match status" value="1"/>
</dbReference>
<dbReference type="FunFam" id="3.30.1490.10:FF:000001">
    <property type="entry name" value="30S ribosomal protein S8"/>
    <property type="match status" value="1"/>
</dbReference>
<dbReference type="Gene3D" id="3.30.1370.30">
    <property type="match status" value="1"/>
</dbReference>
<dbReference type="Gene3D" id="3.30.1490.10">
    <property type="match status" value="1"/>
</dbReference>
<dbReference type="HAMAP" id="MF_01302_B">
    <property type="entry name" value="Ribosomal_uS8_B"/>
    <property type="match status" value="1"/>
</dbReference>
<dbReference type="InterPro" id="IPR000630">
    <property type="entry name" value="Ribosomal_uS8"/>
</dbReference>
<dbReference type="InterPro" id="IPR047863">
    <property type="entry name" value="Ribosomal_uS8_CS"/>
</dbReference>
<dbReference type="InterPro" id="IPR035987">
    <property type="entry name" value="Ribosomal_uS8_sf"/>
</dbReference>
<dbReference type="NCBIfam" id="NF001109">
    <property type="entry name" value="PRK00136.1"/>
    <property type="match status" value="1"/>
</dbReference>
<dbReference type="PANTHER" id="PTHR11758">
    <property type="entry name" value="40S RIBOSOMAL PROTEIN S15A"/>
    <property type="match status" value="1"/>
</dbReference>
<dbReference type="Pfam" id="PF00410">
    <property type="entry name" value="Ribosomal_S8"/>
    <property type="match status" value="1"/>
</dbReference>
<dbReference type="SUPFAM" id="SSF56047">
    <property type="entry name" value="Ribosomal protein S8"/>
    <property type="match status" value="1"/>
</dbReference>
<dbReference type="PROSITE" id="PS00053">
    <property type="entry name" value="RIBOSOMAL_S8"/>
    <property type="match status" value="1"/>
</dbReference>
<keyword id="KW-1185">Reference proteome</keyword>
<keyword id="KW-0687">Ribonucleoprotein</keyword>
<keyword id="KW-0689">Ribosomal protein</keyword>
<keyword id="KW-0694">RNA-binding</keyword>
<keyword id="KW-0699">rRNA-binding</keyword>
<feature type="chain" id="PRO_0000126492" description="Small ribosomal subunit protein uS8">
    <location>
        <begin position="1"/>
        <end position="132"/>
    </location>
</feature>